<dbReference type="SMR" id="P0DQS8"/>
<dbReference type="GO" id="GO:0005576">
    <property type="term" value="C:extracellular region"/>
    <property type="evidence" value="ECO:0007669"/>
    <property type="project" value="UniProtKB-SubCell"/>
</dbReference>
<dbReference type="GO" id="GO:0017080">
    <property type="term" value="F:sodium channel regulator activity"/>
    <property type="evidence" value="ECO:0007669"/>
    <property type="project" value="UniProtKB-KW"/>
</dbReference>
<dbReference type="GO" id="GO:0090729">
    <property type="term" value="F:toxin activity"/>
    <property type="evidence" value="ECO:0007669"/>
    <property type="project" value="UniProtKB-KW"/>
</dbReference>
<protein>
    <recommendedName>
        <fullName evidence="3">Nemertide alpha-6</fullName>
    </recommendedName>
</protein>
<name>NEMA6_LINSA</name>
<comment type="function">
    <text evidence="1 2">Highly potent toxin against both insect and some mammalian sodium channels (Nav) (PubMed:34445875). It potently inhibits inactivation of insect sodium channels of B.germanica (BgNav1) (EC(50)=2.6 nM) and also delays the inactivation of mammalian Nav with potent activity on Nav1.1/SCN1A (hNav1.1/SCN1A; EC(50)=7.9 nM, rNav1.2/SCN2A; EC(50)=24.3 nM, rNav1.3/SCN3A; EC(50)=105.6 nM, rNav1.4/SCN4A; EC(50)=46.4 nM, hNav1.5/SCN5A; EC(50)=215.2 nM, mNav1.6/SCN8A; EC(50)=36.3 nM, hNav1.9/SCN9A; EC(50)=97.2 nM) (PubMed:34445875). 1 uM is enough to completely inhibits the inactivation, resulting in sustained non-inactivating currents (By similarity). In addition, the toxin significantly enhances the recovery from inactivation, and the open state is not required for the toxin to interact with the channel (By similarity). In vivo, injection into brine shrimp (Artemia salina) stops movement or causes death after 24 hours (EC(50)=2.8 uM) (PubMed:34445875).</text>
</comment>
<comment type="subcellular location">
    <subcellularLocation>
        <location evidence="1">Secreted</location>
    </subcellularLocation>
</comment>
<comment type="tissue specificity">
    <text evidence="1">Confined to the epidermis and to the mucus layer.</text>
</comment>
<comment type="domain">
    <text evidence="1">The presence of a 'disulfide through disulfide knot' structurally defines this protein as a knottin.</text>
</comment>
<comment type="miscellaneous">
    <text evidence="2">Negative results: does not show effect on rat Nav1.8/SCN10A.</text>
</comment>
<comment type="similarity">
    <text evidence="4">Belongs to the nemertide family.</text>
</comment>
<reference key="1">
    <citation type="journal article" date="2018" name="Sci. Rep.">
        <title>Peptide ion channel toxins from the bootlace worm, the longest animal on Earth.</title>
        <authorList>
            <person name="Jacobsson E."/>
            <person name="Andersson H.S."/>
            <person name="Strand M."/>
            <person name="Peigneur S."/>
            <person name="Eriksson C."/>
            <person name="Loden H."/>
            <person name="Shariatgorji M."/>
            <person name="Andren P.E."/>
            <person name="Lebbe E.K.M."/>
            <person name="Rosengren K.J."/>
            <person name="Tytgat J."/>
            <person name="Goeransson U."/>
        </authorList>
    </citation>
    <scope>NUCLEOTIDE SEQUENCE [MRNA]</scope>
</reference>
<reference key="2">
    <citation type="journal article" date="2021" name="J. Nat. Prod.">
        <title>Functional characterization of the nemertide alpha family of peptide toxins.</title>
        <authorList>
            <person name="Jacobsson E."/>
            <person name="Peigneur S."/>
            <person name="Andersson H.S."/>
            <person name="Laborde Q."/>
            <person name="Strand M."/>
            <person name="Tytgat J."/>
            <person name="Goeransson U."/>
        </authorList>
    </citation>
    <scope>NUCLEOTIDE SEQUENCE [MRNA]</scope>
    <scope>SYNTHESIS</scope>
    <scope>FUNCTION</scope>
    <scope>BIOASSAY</scope>
</reference>
<keyword id="KW-1015">Disulfide bond</keyword>
<keyword id="KW-0379">Hydroxylation</keyword>
<keyword id="KW-0872">Ion channel impairing toxin</keyword>
<keyword id="KW-0960">Knottin</keyword>
<keyword id="KW-0528">Neurotoxin</keyword>
<keyword id="KW-0964">Secreted</keyword>
<keyword id="KW-0800">Toxin</keyword>
<keyword id="KW-0738">Voltage-gated sodium channel impairing toxin</keyword>
<proteinExistence type="inferred from homology"/>
<feature type="chain" id="PRO_0000454429" description="Nemertide alpha-6" evidence="5">
    <location>
        <begin position="1"/>
        <end position="31"/>
    </location>
</feature>
<feature type="site" description="Hydrophobic/aromatic residue important for potent activity" evidence="6">
    <location>
        <position position="8"/>
    </location>
</feature>
<feature type="modified residue" description="4-hydroxyproline" evidence="1">
    <location>
        <position position="28"/>
    </location>
</feature>
<feature type="modified residue" description="4-hydroxyproline" evidence="1">
    <location>
        <position position="29"/>
    </location>
</feature>
<feature type="disulfide bond" evidence="1">
    <location>
        <begin position="2"/>
        <end position="16"/>
    </location>
</feature>
<feature type="disulfide bond" evidence="1">
    <location>
        <begin position="9"/>
        <end position="20"/>
    </location>
</feature>
<feature type="disulfide bond" evidence="1">
    <location>
        <begin position="15"/>
        <end position="26"/>
    </location>
</feature>
<organism>
    <name type="scientific">Lineus sanguineus</name>
    <name type="common">Ribbon worm</name>
    <dbReference type="NCBI Taxonomy" id="187800"/>
    <lineage>
        <taxon>Eukaryota</taxon>
        <taxon>Metazoa</taxon>
        <taxon>Spiralia</taxon>
        <taxon>Lophotrochozoa</taxon>
        <taxon>Nemertea</taxon>
        <taxon>Pilidiophora</taxon>
        <taxon>Heteronemertea</taxon>
        <taxon>Lineidae</taxon>
        <taxon>Lineus</taxon>
    </lineage>
</organism>
<evidence type="ECO:0000250" key="1">
    <source>
        <dbReference type="UniProtKB" id="P0DM24"/>
    </source>
</evidence>
<evidence type="ECO:0000269" key="2">
    <source>
    </source>
</evidence>
<evidence type="ECO:0000303" key="3">
    <source>
    </source>
</evidence>
<evidence type="ECO:0000305" key="4"/>
<evidence type="ECO:0000305" key="5">
    <source>
    </source>
</evidence>
<evidence type="ECO:0000305" key="6">
    <source>
    </source>
</evidence>
<accession>P0DQS8</accession>
<sequence>GCIKTGSFCTLSKGCCTKNCGWNFHCNPPNQ</sequence>